<proteinExistence type="evidence at transcript level"/>
<feature type="transit peptide" description="Chloroplast" evidence="1">
    <location>
        <begin position="1"/>
        <end position="31"/>
    </location>
</feature>
<feature type="chain" id="PRO_0000019427" description="Ferredoxin-thioredoxin reductase catalytic chain, chloroplastic">
    <location>
        <begin position="32"/>
        <end position="144"/>
    </location>
</feature>
<feature type="active site" description="Nucleophile" evidence="1">
    <location>
        <position position="85"/>
    </location>
</feature>
<feature type="binding site" evidence="1">
    <location>
        <position position="83"/>
    </location>
    <ligand>
        <name>[4Fe-4S] cluster</name>
        <dbReference type="ChEBI" id="CHEBI:49883"/>
    </ligand>
</feature>
<feature type="binding site" evidence="1">
    <location>
        <position position="102"/>
    </location>
    <ligand>
        <name>[4Fe-4S] cluster</name>
        <dbReference type="ChEBI" id="CHEBI:49883"/>
    </ligand>
</feature>
<feature type="binding site" evidence="1">
    <location>
        <position position="104"/>
    </location>
    <ligand>
        <name>[4Fe-4S] cluster</name>
        <dbReference type="ChEBI" id="CHEBI:49883"/>
    </ligand>
</feature>
<feature type="binding site" evidence="1">
    <location>
        <position position="113"/>
    </location>
    <ligand>
        <name>[4Fe-4S] cluster</name>
        <dbReference type="ChEBI" id="CHEBI:49883"/>
    </ligand>
</feature>
<feature type="site" description="Increases the nucleophilicity of the active site Cys" evidence="1">
    <location>
        <position position="114"/>
    </location>
</feature>
<feature type="disulfide bond" description="Redox-active" evidence="1">
    <location>
        <begin position="85"/>
        <end position="115"/>
    </location>
</feature>
<name>FTRC_SOYBN</name>
<gene>
    <name type="primary">FTRC</name>
</gene>
<keyword id="KW-0004">4Fe-4S</keyword>
<keyword id="KW-0150">Chloroplast</keyword>
<keyword id="KW-1015">Disulfide bond</keyword>
<keyword id="KW-0408">Iron</keyword>
<keyword id="KW-0411">Iron-sulfur</keyword>
<keyword id="KW-0479">Metal-binding</keyword>
<keyword id="KW-0560">Oxidoreductase</keyword>
<keyword id="KW-0934">Plastid</keyword>
<keyword id="KW-0676">Redox-active center</keyword>
<keyword id="KW-1185">Reference proteome</keyword>
<keyword id="KW-0809">Transit peptide</keyword>
<dbReference type="EC" id="1.8.7.2"/>
<dbReference type="EMBL" id="Y15076">
    <property type="protein sequence ID" value="CAA75356.1"/>
    <property type="molecule type" value="mRNA"/>
</dbReference>
<dbReference type="PIR" id="T07147">
    <property type="entry name" value="T07147"/>
</dbReference>
<dbReference type="RefSeq" id="NP_001236326.1">
    <property type="nucleotide sequence ID" value="NM_001249397.2"/>
</dbReference>
<dbReference type="SMR" id="O49856"/>
<dbReference type="FunCoup" id="O49856">
    <property type="interactions" value="2050"/>
</dbReference>
<dbReference type="STRING" id="3847.O49856"/>
<dbReference type="PaxDb" id="3847-GLYMA13G04640.2"/>
<dbReference type="ProMEX" id="O49856"/>
<dbReference type="EnsemblPlants" id="KRH18580">
    <property type="protein sequence ID" value="KRH18580"/>
    <property type="gene ID" value="GLYMA_13G069100"/>
</dbReference>
<dbReference type="GeneID" id="547937"/>
<dbReference type="Gramene" id="KRH18580">
    <property type="protein sequence ID" value="KRH18580"/>
    <property type="gene ID" value="GLYMA_13G069100"/>
</dbReference>
<dbReference type="KEGG" id="gmx:547937"/>
<dbReference type="eggNOG" id="ENOG502RZRI">
    <property type="taxonomic scope" value="Eukaryota"/>
</dbReference>
<dbReference type="HOGENOM" id="CLU_108772_1_1_1"/>
<dbReference type="InParanoid" id="O49856"/>
<dbReference type="OMA" id="QTITMDE"/>
<dbReference type="OrthoDB" id="1641at2759"/>
<dbReference type="Proteomes" id="UP000008827">
    <property type="component" value="Chromosome 13"/>
</dbReference>
<dbReference type="GO" id="GO:0009507">
    <property type="term" value="C:chloroplast"/>
    <property type="evidence" value="ECO:0007669"/>
    <property type="project" value="UniProtKB-SubCell"/>
</dbReference>
<dbReference type="GO" id="GO:0051539">
    <property type="term" value="F:4 iron, 4 sulfur cluster binding"/>
    <property type="evidence" value="ECO:0000250"/>
    <property type="project" value="UniProtKB"/>
</dbReference>
<dbReference type="GO" id="GO:0009055">
    <property type="term" value="F:electron transfer activity"/>
    <property type="evidence" value="ECO:0000250"/>
    <property type="project" value="UniProtKB"/>
</dbReference>
<dbReference type="GO" id="GO:0103012">
    <property type="term" value="F:ferredoxin-thioredoxin reductase activity"/>
    <property type="evidence" value="ECO:0000250"/>
    <property type="project" value="UniProtKB"/>
</dbReference>
<dbReference type="GO" id="GO:0046872">
    <property type="term" value="F:metal ion binding"/>
    <property type="evidence" value="ECO:0007669"/>
    <property type="project" value="UniProtKB-KW"/>
</dbReference>
<dbReference type="GO" id="GO:0016730">
    <property type="term" value="F:oxidoreductase activity, acting on iron-sulfur proteins as donors"/>
    <property type="evidence" value="ECO:0007669"/>
    <property type="project" value="InterPro"/>
</dbReference>
<dbReference type="FunFam" id="3.90.460.10:FF:000001">
    <property type="entry name" value="Ferredoxin-thioredoxin reductase, catalytic chain"/>
    <property type="match status" value="1"/>
</dbReference>
<dbReference type="Gene3D" id="3.90.460.10">
    <property type="entry name" value="Ferredoxin thioredoxin reductase catalytic beta subunit"/>
    <property type="match status" value="1"/>
</dbReference>
<dbReference type="InterPro" id="IPR004209">
    <property type="entry name" value="FTR_bsu"/>
</dbReference>
<dbReference type="InterPro" id="IPR036644">
    <property type="entry name" value="FTR_bsu_sf"/>
</dbReference>
<dbReference type="PANTHER" id="PTHR35113">
    <property type="entry name" value="FERREDOXIN-THIOREDOXIN REDUCTASE CATALYTIC CHAIN, CHLOROPLASTIC"/>
    <property type="match status" value="1"/>
</dbReference>
<dbReference type="PANTHER" id="PTHR35113:SF1">
    <property type="entry name" value="FERREDOXIN-THIOREDOXIN REDUCTASE CATALYTIC CHAIN, CHLOROPLASTIC"/>
    <property type="match status" value="1"/>
</dbReference>
<dbReference type="Pfam" id="PF02943">
    <property type="entry name" value="FeThRed_B"/>
    <property type="match status" value="1"/>
</dbReference>
<dbReference type="SUPFAM" id="SSF57662">
    <property type="entry name" value="Ferredoxin thioredoxin reductase (FTR), catalytic beta chain"/>
    <property type="match status" value="1"/>
</dbReference>
<evidence type="ECO:0000250" key="1"/>
<evidence type="ECO:0000305" key="2"/>
<protein>
    <recommendedName>
        <fullName>Ferredoxin-thioredoxin reductase catalytic chain, chloroplastic</fullName>
        <shortName>FTR-C</shortName>
        <ecNumber>1.8.7.2</ecNumber>
    </recommendedName>
    <alternativeName>
        <fullName>Ferredoxin-thioredoxin reductase subunit B</fullName>
        <shortName>FTR-B</shortName>
    </alternativeName>
</protein>
<sequence length="144" mass="16107">MTTQASTFAVAVPSVATPFRRHRNPFVVRAQAEPSDKSVEIMRKFSEQYARKSGTYFCVDKGVTSVVIKGLADHKDTLGAPLCPCRHYDDKAAEVAQGFWNCPCVPMRERKECHCMLFLTPDNDFAGNEQTITLDEIKESTANM</sequence>
<comment type="function">
    <text evidence="1">Catalytic subunit of the ferredoxin-thioredoxin reductase (FTR), which catalyzes the two-electron reduction of thioredoxins by the electrons provided by reduced ferredoxin.</text>
</comment>
<comment type="catalytic activity">
    <reaction>
        <text>[thioredoxin]-disulfide + 2 reduced [2Fe-2S]-[ferredoxin] + 2 H(+) = [thioredoxin]-dithiol + 2 oxidized [2Fe-2S]-[ferredoxin]</text>
        <dbReference type="Rhea" id="RHEA:42336"/>
        <dbReference type="Rhea" id="RHEA-COMP:10000"/>
        <dbReference type="Rhea" id="RHEA-COMP:10001"/>
        <dbReference type="Rhea" id="RHEA-COMP:10698"/>
        <dbReference type="Rhea" id="RHEA-COMP:10700"/>
        <dbReference type="ChEBI" id="CHEBI:15378"/>
        <dbReference type="ChEBI" id="CHEBI:29950"/>
        <dbReference type="ChEBI" id="CHEBI:33737"/>
        <dbReference type="ChEBI" id="CHEBI:33738"/>
        <dbReference type="ChEBI" id="CHEBI:50058"/>
        <dbReference type="EC" id="1.8.7.2"/>
    </reaction>
</comment>
<comment type="cofactor">
    <cofactor evidence="1">
        <name>[4Fe-4S] cluster</name>
        <dbReference type="ChEBI" id="CHEBI:49883"/>
    </cofactor>
    <text evidence="1">Binds 1 [4Fe-4S] cluster.</text>
</comment>
<comment type="subunit">
    <text>Heterodimer of subunit A (variable subunit) and subunit B (catalytic subunit). Heterodimeric FTR forms a complex with ferredoxin and thioredoxin.</text>
</comment>
<comment type="subcellular location">
    <subcellularLocation>
        <location>Plastid</location>
        <location>Chloroplast</location>
    </subcellularLocation>
</comment>
<comment type="similarity">
    <text evidence="2">Belongs to the ferredoxin thioredoxin reductase beta subunit family.</text>
</comment>
<organism>
    <name type="scientific">Glycine max</name>
    <name type="common">Soybean</name>
    <name type="synonym">Glycine hispida</name>
    <dbReference type="NCBI Taxonomy" id="3847"/>
    <lineage>
        <taxon>Eukaryota</taxon>
        <taxon>Viridiplantae</taxon>
        <taxon>Streptophyta</taxon>
        <taxon>Embryophyta</taxon>
        <taxon>Tracheophyta</taxon>
        <taxon>Spermatophyta</taxon>
        <taxon>Magnoliopsida</taxon>
        <taxon>eudicotyledons</taxon>
        <taxon>Gunneridae</taxon>
        <taxon>Pentapetalae</taxon>
        <taxon>rosids</taxon>
        <taxon>fabids</taxon>
        <taxon>Fabales</taxon>
        <taxon>Fabaceae</taxon>
        <taxon>Papilionoideae</taxon>
        <taxon>50 kb inversion clade</taxon>
        <taxon>NPAAA clade</taxon>
        <taxon>indigoferoid/millettioid clade</taxon>
        <taxon>Phaseoleae</taxon>
        <taxon>Glycine</taxon>
        <taxon>Glycine subgen. Soja</taxon>
    </lineage>
</organism>
<reference key="1">
    <citation type="online journal article" date="1998" name="Plant Gene Register">
        <title>Cloning and sequencing of a full-length cDNA coding for the precursor of the catalytic subunit of ferredoxin:thioredoxin reductase from soybean.</title>
        <authorList>
            <person name="Raeber L."/>
            <person name="Gaymard E."/>
            <person name="Schurmann P."/>
        </authorList>
        <locator>PGR98-010</locator>
    </citation>
    <scope>NUCLEOTIDE SEQUENCE [MRNA]</scope>
    <source>
        <strain>cv. Williams 83</strain>
    </source>
</reference>
<accession>O49856</accession>